<sequence>MGASKVKQDMPPPGGYGPIDYKRNLPRRGLSGYSMLALGIGTLIYGHWSMMKWNRERRRLQIEDFEARIALLPLLQAETDRRTLQMLRENLEEEAIIMKDVPDWKVGESVFHTTRWVAPLIGELYGLRTTEEALHASHGFMWYA</sequence>
<dbReference type="EMBL" id="DQ885746">
    <property type="protein sequence ID" value="ABH12255.1"/>
    <property type="molecule type" value="mRNA"/>
</dbReference>
<dbReference type="SMR" id="Q0MQ88"/>
<dbReference type="OrthoDB" id="3308at2759"/>
<dbReference type="GO" id="GO:0005737">
    <property type="term" value="C:cytoplasm"/>
    <property type="evidence" value="ECO:0000250"/>
    <property type="project" value="UniProtKB"/>
</dbReference>
<dbReference type="GO" id="GO:0005743">
    <property type="term" value="C:mitochondrial inner membrane"/>
    <property type="evidence" value="ECO:0007669"/>
    <property type="project" value="UniProtKB-SubCell"/>
</dbReference>
<dbReference type="GO" id="GO:0031966">
    <property type="term" value="C:mitochondrial membrane"/>
    <property type="evidence" value="ECO:0000250"/>
    <property type="project" value="UniProtKB"/>
</dbReference>
<dbReference type="GO" id="GO:0005739">
    <property type="term" value="C:mitochondrion"/>
    <property type="evidence" value="ECO:0000250"/>
    <property type="project" value="UniProtKB"/>
</dbReference>
<dbReference type="GO" id="GO:0005654">
    <property type="term" value="C:nucleoplasm"/>
    <property type="evidence" value="ECO:0000250"/>
    <property type="project" value="UniProtKB"/>
</dbReference>
<dbReference type="GO" id="GO:0098803">
    <property type="term" value="C:respiratory chain complex"/>
    <property type="evidence" value="ECO:0000250"/>
    <property type="project" value="UniProtKB"/>
</dbReference>
<dbReference type="GO" id="GO:0045271">
    <property type="term" value="C:respiratory chain complex I"/>
    <property type="evidence" value="ECO:0000250"/>
    <property type="project" value="UniProtKB"/>
</dbReference>
<dbReference type="GO" id="GO:0045892">
    <property type="term" value="P:negative regulation of DNA-templated transcription"/>
    <property type="evidence" value="ECO:0000250"/>
    <property type="project" value="UniProtKB"/>
</dbReference>
<dbReference type="InterPro" id="IPR009346">
    <property type="entry name" value="GRIM-19"/>
</dbReference>
<dbReference type="PANTHER" id="PTHR12966:SF0">
    <property type="entry name" value="NADH DEHYDROGENASE [UBIQUINONE] 1 ALPHA SUBCOMPLEX SUBUNIT 13"/>
    <property type="match status" value="1"/>
</dbReference>
<dbReference type="PANTHER" id="PTHR12966">
    <property type="entry name" value="NADH DEHYDROGENASE UBIQUINONE 1 ALPHA SUBCOMPLEX SUBUNIT 13"/>
    <property type="match status" value="1"/>
</dbReference>
<dbReference type="Pfam" id="PF06212">
    <property type="entry name" value="GRIM-19"/>
    <property type="match status" value="1"/>
</dbReference>
<keyword id="KW-0249">Electron transport</keyword>
<keyword id="KW-0472">Membrane</keyword>
<keyword id="KW-0496">Mitochondrion</keyword>
<keyword id="KW-0999">Mitochondrion inner membrane</keyword>
<keyword id="KW-0539">Nucleus</keyword>
<keyword id="KW-0679">Respiratory chain</keyword>
<keyword id="KW-0812">Transmembrane</keyword>
<keyword id="KW-1133">Transmembrane helix</keyword>
<keyword id="KW-0813">Transport</keyword>
<reference key="1">
    <citation type="journal article" date="2006" name="Gene">
        <title>Adaptive selection of mitochondrial complex I subunits during primate radiation.</title>
        <authorList>
            <person name="Mishmar D."/>
            <person name="Ruiz-Pesini E."/>
            <person name="Mondragon-Palomino M."/>
            <person name="Procaccio V."/>
            <person name="Gaut B."/>
            <person name="Wallace D.C."/>
        </authorList>
    </citation>
    <scope>NUCLEOTIDE SEQUENCE [MRNA]</scope>
</reference>
<name>NDUAD_PONPY</name>
<organism>
    <name type="scientific">Pongo pygmaeus</name>
    <name type="common">Bornean orangutan</name>
    <dbReference type="NCBI Taxonomy" id="9600"/>
    <lineage>
        <taxon>Eukaryota</taxon>
        <taxon>Metazoa</taxon>
        <taxon>Chordata</taxon>
        <taxon>Craniata</taxon>
        <taxon>Vertebrata</taxon>
        <taxon>Euteleostomi</taxon>
        <taxon>Mammalia</taxon>
        <taxon>Eutheria</taxon>
        <taxon>Euarchontoglires</taxon>
        <taxon>Primates</taxon>
        <taxon>Haplorrhini</taxon>
        <taxon>Catarrhini</taxon>
        <taxon>Hominidae</taxon>
        <taxon>Pongo</taxon>
    </lineage>
</organism>
<feature type="chain" id="PRO_0000251822" description="NADH dehydrogenase [ubiquinone] 1 alpha subcomplex subunit 13">
    <location>
        <begin position="1"/>
        <end position="144"/>
    </location>
</feature>
<feature type="transmembrane region" description="Helical" evidence="2">
    <location>
        <begin position="30"/>
        <end position="51"/>
    </location>
</feature>
<protein>
    <recommendedName>
        <fullName>NADH dehydrogenase [ubiquinone] 1 alpha subcomplex subunit 13</fullName>
    </recommendedName>
    <alternativeName>
        <fullName>Complex I-B16.6</fullName>
        <shortName>CI-B16.6</shortName>
    </alternativeName>
    <alternativeName>
        <fullName>NADH-ubiquinone oxidoreductase B16.6 subunit</fullName>
    </alternativeName>
</protein>
<gene>
    <name type="primary">NDUFA13</name>
</gene>
<evidence type="ECO:0000250" key="1">
    <source>
        <dbReference type="UniProtKB" id="Q9P0J0"/>
    </source>
</evidence>
<evidence type="ECO:0000255" key="2"/>
<evidence type="ECO:0000305" key="3"/>
<proteinExistence type="evidence at transcript level"/>
<comment type="function">
    <text evidence="1">Accessory subunit of the mitochondrial membrane respiratory chain NADH dehydrogenase (Complex I), that is believed not to be involved in catalysis. Complex I functions in the transfer of electrons from NADH to the respiratory chain. The immediate electron acceptor for the enzyme is believed to be ubiquinone. Involved in the interferon/all-trans-retinoic acid (IFN/RA) induced cell death. This apoptotic activity is inhibited by interaction with viral IRF1. Prevents the transactivation of STAT3 target genes. May play a role in CARD15-mediated innate mucosal responses and serve to regulate intestinal epithelial cell responses to microbes.</text>
</comment>
<comment type="subunit">
    <text evidence="1">Complex I is composed of 45 different subunits. Interacts with CARD15, but not with CARD4. Interacts with STAT3, but not with STAT1, STAT2 and STAT5A. Interacts with OLFM4.</text>
</comment>
<comment type="subcellular location">
    <subcellularLocation>
        <location evidence="1">Mitochondrion inner membrane</location>
        <topology evidence="2">Single-pass membrane protein</topology>
        <orientation evidence="1">Matrix side</orientation>
    </subcellularLocation>
    <subcellularLocation>
        <location evidence="1">Nucleus</location>
    </subcellularLocation>
    <text evidence="1">Localizes mainly in the mitochondrion. May be translocated into the nucleus upon IFN/RA treatment.</text>
</comment>
<comment type="similarity">
    <text evidence="3">Belongs to the complex I NDUFA13 subunit family.</text>
</comment>
<accession>Q0MQ88</accession>